<comment type="function">
    <text evidence="1">Component of the helicase/primase complex. Unwinds the DNA at the replication forks and generates single-stranded DNA for both leading and lagging strand synthesis. The primase synthesizes short RNA primers on the lagging strand that the polymerase presumably elongates using dNTPs. The primase-associated factor has no known catalytic activity in the complex and may serve to facilitate the formation of the replisome by directly interacting with the origin-binding protein and the polymerase.</text>
</comment>
<comment type="subunit">
    <text evidence="1">Associates with the primase and the helicase to form the helicase-primase complex. Interacts with the origin-binding protein. Interacts with the polymerase catalytic subunit.</text>
</comment>
<comment type="subcellular location">
    <subcellularLocation>
        <location evidence="1">Host nucleus</location>
    </subcellularLocation>
</comment>
<comment type="similarity">
    <text evidence="1">Belongs to the herpesviridae HEPA family.</text>
</comment>
<keyword id="KW-0235">DNA replication</keyword>
<keyword id="KW-1048">Host nucleus</keyword>
<keyword id="KW-1185">Reference proteome</keyword>
<protein>
    <recommendedName>
        <fullName evidence="1">DNA helicase/primase complex-associated protein</fullName>
        <shortName evidence="1">HEPA</shortName>
    </recommendedName>
    <alternativeName>
        <fullName evidence="1">Primase-associated factor</fullName>
    </alternativeName>
</protein>
<sequence length="662" mass="76316">MHLRGCACHLSLYCVYNDWENKIYRVPIFQCLFLEAETRSLKTFLIRGQSLDQESLNEIEVTRKETMLWDLQEQSNMMDKKIAAISNLIMNNGELVRTLSKFFVPLTVVLGDDGLEILEAYVCGEELMLPLDTVPVILRCIGDYAALDTKHLLSNECTQASKKIRFGYSVMDFHFSLTVSDVKICFSHTDTGEAVCEKMKQIFSFSVCAFGGEQVLLVTPKNAYALLFDDDLCLLLLQSVFAFLHEKIFGVYKQVLVQLCEYIGPDLWPFGNERSVSFIGYPNLWLLSVSDLERRVPDTTYICREILSFCGLAPILGPRGRHAVPVVRELSIEMPGSETSLQRFRFNSQYVSSESLCFQTGPEDTHLFFSDSDMYVVTLPDCLRLLLKSTVPKAFLPCFDENATEIDLLLKFMSRLQHRSYALFDAVIFMLDAFVSAFQRACTLMGMRWLLVRDLHMFYLTCDGKDTHVVMPLLQTAVENCWEKTTEIKQRPTFQCAEISRCGFIVYARFFLSSGLSQSKEAHWTVTASKYLSACIRTNKTGLCFASITVYFQDMMCVFIANRYNVSYWIEEFDPNDYCLEYHEGLLDCSRYTAVMSEDGQLVRQARGIALTDKINFSYYILVTLRVLRRWVESKFEDVEQTQFIRWENRMLCEHIHLLHLN</sequence>
<feature type="chain" id="PRO_0000115861" description="DNA helicase/primase complex-associated protein">
    <location>
        <begin position="1"/>
        <end position="662"/>
    </location>
</feature>
<accession>P52375</accession>
<organism>
    <name type="scientific">Human herpesvirus 6A (strain Uganda-1102)</name>
    <name type="common">HHV-6 variant A</name>
    <name type="synonym">Human B lymphotropic virus</name>
    <dbReference type="NCBI Taxonomy" id="10370"/>
    <lineage>
        <taxon>Viruses</taxon>
        <taxon>Duplodnaviria</taxon>
        <taxon>Heunggongvirae</taxon>
        <taxon>Peploviricota</taxon>
        <taxon>Herviviricetes</taxon>
        <taxon>Herpesvirales</taxon>
        <taxon>Orthoherpesviridae</taxon>
        <taxon>Betaherpesvirinae</taxon>
        <taxon>Roseolovirus</taxon>
        <taxon>Roseolovirus humanbeta6a</taxon>
        <taxon>Human betaherpesvirus 6A</taxon>
    </lineage>
</organism>
<reference key="1">
    <citation type="journal article" date="1994" name="Virology">
        <title>Nucleotide sequence analysis of a 21-kbp region of the genome of human herpesvirus-6 containing homologues of human cytomegalovirus major immediate-early and replication genes.</title>
        <authorList>
            <person name="Nicholas J."/>
        </authorList>
    </citation>
    <scope>NUCLEOTIDE SEQUENCE [GENOMIC DNA]</scope>
</reference>
<reference key="2">
    <citation type="journal article" date="1995" name="Virology">
        <title>The DNA sequence of human herpesvirus-6: structure, coding content, and genome evolution.</title>
        <authorList>
            <person name="Gompels U.A."/>
            <person name="Nicholas J."/>
            <person name="Lawrence G.L."/>
            <person name="Jones M."/>
            <person name="Thomson B.J."/>
            <person name="Martin M.E.D."/>
            <person name="Efstathiou S."/>
            <person name="Craxton M.A."/>
            <person name="Macaulay H.A."/>
        </authorList>
    </citation>
    <scope>NUCLEOTIDE SEQUENCE [LARGE SCALE GENOMIC DNA]</scope>
</reference>
<name>HEPA_HHV6U</name>
<proteinExistence type="inferred from homology"/>
<gene>
    <name type="primary">U74</name>
    <name type="synonym">HDRF1</name>
</gene>
<evidence type="ECO:0000255" key="1">
    <source>
        <dbReference type="HAMAP-Rule" id="MF_04010"/>
    </source>
</evidence>
<organismHost>
    <name type="scientific">Homo sapiens</name>
    <name type="common">Human</name>
    <dbReference type="NCBI Taxonomy" id="9606"/>
</organismHost>
<dbReference type="EMBL" id="U13194">
    <property type="protein sequence ID" value="AAA68465.1"/>
    <property type="molecule type" value="Genomic_DNA"/>
</dbReference>
<dbReference type="EMBL" id="X83413">
    <property type="protein sequence ID" value="CAA58366.1"/>
    <property type="molecule type" value="Genomic_DNA"/>
</dbReference>
<dbReference type="RefSeq" id="NP_042967.1">
    <property type="nucleotide sequence ID" value="NC_001664.2"/>
</dbReference>
<dbReference type="DNASU" id="1487955"/>
<dbReference type="GeneID" id="1487955"/>
<dbReference type="KEGG" id="vg:1487955"/>
<dbReference type="Proteomes" id="UP000009295">
    <property type="component" value="Segment"/>
</dbReference>
<dbReference type="GO" id="GO:0042025">
    <property type="term" value="C:host cell nucleus"/>
    <property type="evidence" value="ECO:0007669"/>
    <property type="project" value="UniProtKB-SubCell"/>
</dbReference>
<dbReference type="GO" id="GO:0006260">
    <property type="term" value="P:DNA replication"/>
    <property type="evidence" value="ECO:0007669"/>
    <property type="project" value="UniProtKB-KW"/>
</dbReference>
<dbReference type="GO" id="GO:0019079">
    <property type="term" value="P:viral genome replication"/>
    <property type="evidence" value="ECO:0007669"/>
    <property type="project" value="InterPro"/>
</dbReference>
<dbReference type="HAMAP" id="MF_04010">
    <property type="entry name" value="HSV_HEPA"/>
    <property type="match status" value="1"/>
</dbReference>
<dbReference type="InterPro" id="IPR004996">
    <property type="entry name" value="HSV_HEPA"/>
</dbReference>
<dbReference type="Pfam" id="PF03324">
    <property type="entry name" value="Herpes_HEPA"/>
    <property type="match status" value="1"/>
</dbReference>